<organism>
    <name type="scientific">Prochlorococcus marinus (strain MIT 9215)</name>
    <dbReference type="NCBI Taxonomy" id="93060"/>
    <lineage>
        <taxon>Bacteria</taxon>
        <taxon>Bacillati</taxon>
        <taxon>Cyanobacteriota</taxon>
        <taxon>Cyanophyceae</taxon>
        <taxon>Synechococcales</taxon>
        <taxon>Prochlorococcaceae</taxon>
        <taxon>Prochlorococcus</taxon>
    </lineage>
</organism>
<feature type="chain" id="PRO_1000067703" description="Small ribosomal subunit protein uS17">
    <location>
        <begin position="1"/>
        <end position="88"/>
    </location>
</feature>
<name>RS17_PROM2</name>
<evidence type="ECO:0000255" key="1">
    <source>
        <dbReference type="HAMAP-Rule" id="MF_01345"/>
    </source>
</evidence>
<evidence type="ECO:0000305" key="2"/>
<keyword id="KW-0687">Ribonucleoprotein</keyword>
<keyword id="KW-0689">Ribosomal protein</keyword>
<keyword id="KW-0694">RNA-binding</keyword>
<keyword id="KW-0699">rRNA-binding</keyword>
<proteinExistence type="inferred from homology"/>
<comment type="function">
    <text evidence="1">One of the primary rRNA binding proteins, it binds specifically to the 5'-end of 16S ribosomal RNA.</text>
</comment>
<comment type="subunit">
    <text evidence="1">Part of the 30S ribosomal subunit.</text>
</comment>
<comment type="similarity">
    <text evidence="1">Belongs to the universal ribosomal protein uS17 family.</text>
</comment>
<reference key="1">
    <citation type="journal article" date="2007" name="PLoS Genet.">
        <title>Patterns and implications of gene gain and loss in the evolution of Prochlorococcus.</title>
        <authorList>
            <person name="Kettler G.C."/>
            <person name="Martiny A.C."/>
            <person name="Huang K."/>
            <person name="Zucker J."/>
            <person name="Coleman M.L."/>
            <person name="Rodrigue S."/>
            <person name="Chen F."/>
            <person name="Lapidus A."/>
            <person name="Ferriera S."/>
            <person name="Johnson J."/>
            <person name="Steglich C."/>
            <person name="Church G.M."/>
            <person name="Richardson P."/>
            <person name="Chisholm S.W."/>
        </authorList>
    </citation>
    <scope>NUCLEOTIDE SEQUENCE [LARGE SCALE GENOMIC DNA]</scope>
    <source>
        <strain>MIT 9215</strain>
    </source>
</reference>
<gene>
    <name evidence="1" type="primary">rpsQ</name>
    <name evidence="1" type="synonym">rps17</name>
    <name type="ordered locus">P9215_18201</name>
</gene>
<accession>A8G752</accession>
<protein>
    <recommendedName>
        <fullName evidence="1">Small ribosomal subunit protein uS17</fullName>
    </recommendedName>
    <alternativeName>
        <fullName evidence="2">30S ribosomal protein S17</fullName>
    </alternativeName>
</protein>
<dbReference type="EMBL" id="CP000825">
    <property type="protein sequence ID" value="ABV51433.1"/>
    <property type="molecule type" value="Genomic_DNA"/>
</dbReference>
<dbReference type="RefSeq" id="WP_012008439.1">
    <property type="nucleotide sequence ID" value="NC_009840.1"/>
</dbReference>
<dbReference type="SMR" id="A8G752"/>
<dbReference type="STRING" id="93060.P9215_18201"/>
<dbReference type="KEGG" id="pmh:P9215_18201"/>
<dbReference type="eggNOG" id="COG0186">
    <property type="taxonomic scope" value="Bacteria"/>
</dbReference>
<dbReference type="HOGENOM" id="CLU_073626_1_2_3"/>
<dbReference type="OrthoDB" id="9811714at2"/>
<dbReference type="Proteomes" id="UP000002014">
    <property type="component" value="Chromosome"/>
</dbReference>
<dbReference type="GO" id="GO:0022627">
    <property type="term" value="C:cytosolic small ribosomal subunit"/>
    <property type="evidence" value="ECO:0007669"/>
    <property type="project" value="TreeGrafter"/>
</dbReference>
<dbReference type="GO" id="GO:0019843">
    <property type="term" value="F:rRNA binding"/>
    <property type="evidence" value="ECO:0007669"/>
    <property type="project" value="UniProtKB-UniRule"/>
</dbReference>
<dbReference type="GO" id="GO:0003735">
    <property type="term" value="F:structural constituent of ribosome"/>
    <property type="evidence" value="ECO:0007669"/>
    <property type="project" value="InterPro"/>
</dbReference>
<dbReference type="GO" id="GO:0006412">
    <property type="term" value="P:translation"/>
    <property type="evidence" value="ECO:0007669"/>
    <property type="project" value="UniProtKB-UniRule"/>
</dbReference>
<dbReference type="CDD" id="cd00364">
    <property type="entry name" value="Ribosomal_uS17"/>
    <property type="match status" value="1"/>
</dbReference>
<dbReference type="Gene3D" id="2.40.50.140">
    <property type="entry name" value="Nucleic acid-binding proteins"/>
    <property type="match status" value="1"/>
</dbReference>
<dbReference type="HAMAP" id="MF_01345_B">
    <property type="entry name" value="Ribosomal_uS17_B"/>
    <property type="match status" value="1"/>
</dbReference>
<dbReference type="InterPro" id="IPR012340">
    <property type="entry name" value="NA-bd_OB-fold"/>
</dbReference>
<dbReference type="InterPro" id="IPR000266">
    <property type="entry name" value="Ribosomal_uS17"/>
</dbReference>
<dbReference type="InterPro" id="IPR019984">
    <property type="entry name" value="Ribosomal_uS17_bact/chlr"/>
</dbReference>
<dbReference type="InterPro" id="IPR019979">
    <property type="entry name" value="Ribosomal_uS17_CS"/>
</dbReference>
<dbReference type="NCBIfam" id="NF004123">
    <property type="entry name" value="PRK05610.1"/>
    <property type="match status" value="1"/>
</dbReference>
<dbReference type="NCBIfam" id="TIGR03635">
    <property type="entry name" value="uS17_bact"/>
    <property type="match status" value="1"/>
</dbReference>
<dbReference type="PANTHER" id="PTHR10744">
    <property type="entry name" value="40S RIBOSOMAL PROTEIN S11 FAMILY MEMBER"/>
    <property type="match status" value="1"/>
</dbReference>
<dbReference type="PANTHER" id="PTHR10744:SF1">
    <property type="entry name" value="SMALL RIBOSOMAL SUBUNIT PROTEIN US17M"/>
    <property type="match status" value="1"/>
</dbReference>
<dbReference type="Pfam" id="PF00366">
    <property type="entry name" value="Ribosomal_S17"/>
    <property type="match status" value="1"/>
</dbReference>
<dbReference type="PRINTS" id="PR00973">
    <property type="entry name" value="RIBOSOMALS17"/>
</dbReference>
<dbReference type="SUPFAM" id="SSF50249">
    <property type="entry name" value="Nucleic acid-binding proteins"/>
    <property type="match status" value="1"/>
</dbReference>
<dbReference type="PROSITE" id="PS00056">
    <property type="entry name" value="RIBOSOMAL_S17"/>
    <property type="match status" value="1"/>
</dbReference>
<sequence>MALKERIGTVVSDKMDKTVVVAVINRYPHPTYKKIVSRTTRYKAHDPENTCVTGDRVKIRETRPLSAQKRWAIEEILNKTNQAKEVKK</sequence>